<sequence>MPNKSPTRTLYALFGGTFDPIHYGHLKPVETLAQQVGLQHIILLPNHVPPHRPQPEANAQQRLKMVELAVAGNPLFSVDSRELLRDTPSFTIDTLESLRKERGAERPLAFIIGQDSLLSLHKWHRWQSLLDVCHLLVCARPGYAQTLETPELQQWLDAHRVFDPQALSLRPHGAIYLADTPLLDISATDIRHRRHNGESCDDLLPRAVQRYIELQGLYRG</sequence>
<proteinExistence type="inferred from homology"/>
<feature type="chain" id="PRO_0000310155" description="Probable nicotinate-nucleotide adenylyltransferase">
    <location>
        <begin position="1"/>
        <end position="220"/>
    </location>
</feature>
<gene>
    <name evidence="1" type="primary">nadD</name>
    <name type="ordered locus">YE2999</name>
</gene>
<accession>A1JPW3</accession>
<organism>
    <name type="scientific">Yersinia enterocolitica serotype O:8 / biotype 1B (strain NCTC 13174 / 8081)</name>
    <dbReference type="NCBI Taxonomy" id="393305"/>
    <lineage>
        <taxon>Bacteria</taxon>
        <taxon>Pseudomonadati</taxon>
        <taxon>Pseudomonadota</taxon>
        <taxon>Gammaproteobacteria</taxon>
        <taxon>Enterobacterales</taxon>
        <taxon>Yersiniaceae</taxon>
        <taxon>Yersinia</taxon>
    </lineage>
</organism>
<protein>
    <recommendedName>
        <fullName evidence="1">Probable nicotinate-nucleotide adenylyltransferase</fullName>
        <ecNumber evidence="1">2.7.7.18</ecNumber>
    </recommendedName>
    <alternativeName>
        <fullName evidence="1">Deamido-NAD(+) diphosphorylase</fullName>
    </alternativeName>
    <alternativeName>
        <fullName evidence="1">Deamido-NAD(+) pyrophosphorylase</fullName>
    </alternativeName>
    <alternativeName>
        <fullName evidence="1">Nicotinate mononucleotide adenylyltransferase</fullName>
        <shortName evidence="1">NaMN adenylyltransferase</shortName>
    </alternativeName>
</protein>
<name>NADD_YERE8</name>
<evidence type="ECO:0000255" key="1">
    <source>
        <dbReference type="HAMAP-Rule" id="MF_00244"/>
    </source>
</evidence>
<keyword id="KW-0067">ATP-binding</keyword>
<keyword id="KW-0520">NAD</keyword>
<keyword id="KW-0547">Nucleotide-binding</keyword>
<keyword id="KW-0548">Nucleotidyltransferase</keyword>
<keyword id="KW-0662">Pyridine nucleotide biosynthesis</keyword>
<keyword id="KW-0808">Transferase</keyword>
<reference key="1">
    <citation type="journal article" date="2006" name="PLoS Genet.">
        <title>The complete genome sequence and comparative genome analysis of the high pathogenicity Yersinia enterocolitica strain 8081.</title>
        <authorList>
            <person name="Thomson N.R."/>
            <person name="Howard S."/>
            <person name="Wren B.W."/>
            <person name="Holden M.T.G."/>
            <person name="Crossman L."/>
            <person name="Challis G.L."/>
            <person name="Churcher C."/>
            <person name="Mungall K."/>
            <person name="Brooks K."/>
            <person name="Chillingworth T."/>
            <person name="Feltwell T."/>
            <person name="Abdellah Z."/>
            <person name="Hauser H."/>
            <person name="Jagels K."/>
            <person name="Maddison M."/>
            <person name="Moule S."/>
            <person name="Sanders M."/>
            <person name="Whitehead S."/>
            <person name="Quail M.A."/>
            <person name="Dougan G."/>
            <person name="Parkhill J."/>
            <person name="Prentice M.B."/>
        </authorList>
    </citation>
    <scope>NUCLEOTIDE SEQUENCE [LARGE SCALE GENOMIC DNA]</scope>
    <source>
        <strain>NCTC 13174 / 8081</strain>
    </source>
</reference>
<comment type="function">
    <text evidence="1">Catalyzes the reversible adenylation of nicotinate mononucleotide (NaMN) to nicotinic acid adenine dinucleotide (NaAD).</text>
</comment>
<comment type="catalytic activity">
    <reaction evidence="1">
        <text>nicotinate beta-D-ribonucleotide + ATP + H(+) = deamido-NAD(+) + diphosphate</text>
        <dbReference type="Rhea" id="RHEA:22860"/>
        <dbReference type="ChEBI" id="CHEBI:15378"/>
        <dbReference type="ChEBI" id="CHEBI:30616"/>
        <dbReference type="ChEBI" id="CHEBI:33019"/>
        <dbReference type="ChEBI" id="CHEBI:57502"/>
        <dbReference type="ChEBI" id="CHEBI:58437"/>
        <dbReference type="EC" id="2.7.7.18"/>
    </reaction>
</comment>
<comment type="pathway">
    <text evidence="1">Cofactor biosynthesis; NAD(+) biosynthesis; deamido-NAD(+) from nicotinate D-ribonucleotide: step 1/1.</text>
</comment>
<comment type="similarity">
    <text evidence="1">Belongs to the NadD family.</text>
</comment>
<dbReference type="EC" id="2.7.7.18" evidence="1"/>
<dbReference type="EMBL" id="AM286415">
    <property type="protein sequence ID" value="CAL13038.1"/>
    <property type="molecule type" value="Genomic_DNA"/>
</dbReference>
<dbReference type="RefSeq" id="WP_011816837.1">
    <property type="nucleotide sequence ID" value="NC_008800.1"/>
</dbReference>
<dbReference type="RefSeq" id="YP_001007188.1">
    <property type="nucleotide sequence ID" value="NC_008800.1"/>
</dbReference>
<dbReference type="SMR" id="A1JPW3"/>
<dbReference type="KEGG" id="yen:YE2999"/>
<dbReference type="PATRIC" id="fig|393305.7.peg.3194"/>
<dbReference type="eggNOG" id="COG1057">
    <property type="taxonomic scope" value="Bacteria"/>
</dbReference>
<dbReference type="HOGENOM" id="CLU_069765_0_0_6"/>
<dbReference type="OrthoDB" id="5295945at2"/>
<dbReference type="UniPathway" id="UPA00253">
    <property type="reaction ID" value="UER00332"/>
</dbReference>
<dbReference type="Proteomes" id="UP000000642">
    <property type="component" value="Chromosome"/>
</dbReference>
<dbReference type="GO" id="GO:0005524">
    <property type="term" value="F:ATP binding"/>
    <property type="evidence" value="ECO:0007669"/>
    <property type="project" value="UniProtKB-KW"/>
</dbReference>
<dbReference type="GO" id="GO:0004515">
    <property type="term" value="F:nicotinate-nucleotide adenylyltransferase activity"/>
    <property type="evidence" value="ECO:0007669"/>
    <property type="project" value="UniProtKB-UniRule"/>
</dbReference>
<dbReference type="GO" id="GO:0009435">
    <property type="term" value="P:NAD biosynthetic process"/>
    <property type="evidence" value="ECO:0007669"/>
    <property type="project" value="UniProtKB-UniRule"/>
</dbReference>
<dbReference type="CDD" id="cd02165">
    <property type="entry name" value="NMNAT"/>
    <property type="match status" value="1"/>
</dbReference>
<dbReference type="FunFam" id="3.40.50.620:FF:000039">
    <property type="entry name" value="Probable nicotinate-nucleotide adenylyltransferase"/>
    <property type="match status" value="1"/>
</dbReference>
<dbReference type="Gene3D" id="3.40.50.620">
    <property type="entry name" value="HUPs"/>
    <property type="match status" value="1"/>
</dbReference>
<dbReference type="HAMAP" id="MF_00244">
    <property type="entry name" value="NaMN_adenylyltr"/>
    <property type="match status" value="1"/>
</dbReference>
<dbReference type="InterPro" id="IPR004821">
    <property type="entry name" value="Cyt_trans-like"/>
</dbReference>
<dbReference type="InterPro" id="IPR005248">
    <property type="entry name" value="NadD/NMNAT"/>
</dbReference>
<dbReference type="InterPro" id="IPR014729">
    <property type="entry name" value="Rossmann-like_a/b/a_fold"/>
</dbReference>
<dbReference type="NCBIfam" id="TIGR00125">
    <property type="entry name" value="cyt_tran_rel"/>
    <property type="match status" value="1"/>
</dbReference>
<dbReference type="NCBIfam" id="TIGR00482">
    <property type="entry name" value="nicotinate (nicotinamide) nucleotide adenylyltransferase"/>
    <property type="match status" value="1"/>
</dbReference>
<dbReference type="NCBIfam" id="NF000839">
    <property type="entry name" value="PRK00071.1-1"/>
    <property type="match status" value="1"/>
</dbReference>
<dbReference type="NCBIfam" id="NF000840">
    <property type="entry name" value="PRK00071.1-3"/>
    <property type="match status" value="1"/>
</dbReference>
<dbReference type="PANTHER" id="PTHR39321">
    <property type="entry name" value="NICOTINATE-NUCLEOTIDE ADENYLYLTRANSFERASE-RELATED"/>
    <property type="match status" value="1"/>
</dbReference>
<dbReference type="PANTHER" id="PTHR39321:SF3">
    <property type="entry name" value="PHOSPHOPANTETHEINE ADENYLYLTRANSFERASE"/>
    <property type="match status" value="1"/>
</dbReference>
<dbReference type="Pfam" id="PF01467">
    <property type="entry name" value="CTP_transf_like"/>
    <property type="match status" value="1"/>
</dbReference>
<dbReference type="SUPFAM" id="SSF52374">
    <property type="entry name" value="Nucleotidylyl transferase"/>
    <property type="match status" value="1"/>
</dbReference>